<sequence length="382" mass="42355">MTEQRPLTIALVAGETSGDILGAGLIRALKERVPNARFVGVAGPRMQAEGCEAWYEMEELAVMGIVEVLGRLRRLLHIRADLTKRFGELKPDVFVGIDAPDFNITLEGNLKKQGIKTIHYVSPSVWAWRQKRVFKIGRATDLVLAFLPFEKAFYDKYNVPCRFIGHTMADAMPLDPDKNGARDVLGIPYDAHCLALLPGSRGAEVEMLSADFLKTAQLLRQTYPDLEIVVPLVNAKRREQFERIKAAVAPDLSVHLLDGMGREAMVASDAALLASGTAALECMLAKCPMVVGYRMKPFTFWLAKRLVKTDYVSLPNLLAGRELVKELLQEECEPQKLAAALLPLLANGKTSHAMHDTFRELHQQIRCNADEQAAQAVLELAQ</sequence>
<comment type="function">
    <text evidence="1">Condensation of UDP-2,3-diacylglucosamine and 2,3-diacylglucosamine-1-phosphate to form lipid A disaccharide, a precursor of lipid A, a phosphorylated glycolipid that anchors the lipopolysaccharide to the outer membrane of the cell.</text>
</comment>
<comment type="catalytic activity">
    <reaction evidence="1">
        <text>2-N,3-O-bis[(3R)-3-hydroxytetradecanoyl]-alpha-D-glucosaminyl 1-phosphate + UDP-2-N,3-O-bis[(3R)-3-hydroxytetradecanoyl]-alpha-D-glucosamine = lipid A disaccharide (E. coli) + UDP + H(+)</text>
        <dbReference type="Rhea" id="RHEA:22668"/>
        <dbReference type="ChEBI" id="CHEBI:15378"/>
        <dbReference type="ChEBI" id="CHEBI:57957"/>
        <dbReference type="ChEBI" id="CHEBI:58223"/>
        <dbReference type="ChEBI" id="CHEBI:58466"/>
        <dbReference type="ChEBI" id="CHEBI:78847"/>
    </reaction>
</comment>
<comment type="catalytic activity">
    <reaction evidence="1">
        <text>a lipid X + a UDP-2-N,3-O-bis[(3R)-3-hydroxyacyl]-alpha-D-glucosamine = a lipid A disaccharide + UDP + H(+)</text>
        <dbReference type="Rhea" id="RHEA:67828"/>
        <dbReference type="ChEBI" id="CHEBI:15378"/>
        <dbReference type="ChEBI" id="CHEBI:58223"/>
        <dbReference type="ChEBI" id="CHEBI:137748"/>
        <dbReference type="ChEBI" id="CHEBI:176338"/>
        <dbReference type="ChEBI" id="CHEBI:176343"/>
        <dbReference type="EC" id="2.4.1.182"/>
    </reaction>
</comment>
<comment type="pathway">
    <text evidence="1">Glycolipid biosynthesis; lipid IV(A) biosynthesis; lipid IV(A) from (3R)-3-hydroxytetradecanoyl-[acyl-carrier-protein] and UDP-N-acetyl-alpha-D-glucosamine: step 5/6.</text>
</comment>
<comment type="similarity">
    <text evidence="1">Belongs to the LpxB family.</text>
</comment>
<name>LPXB_ECOK1</name>
<feature type="chain" id="PRO_1000049394" description="Lipid-A-disaccharide synthase">
    <location>
        <begin position="1"/>
        <end position="382"/>
    </location>
</feature>
<dbReference type="EC" id="2.4.1.182" evidence="1"/>
<dbReference type="EMBL" id="CP000468">
    <property type="protein sequence ID" value="ABI99665.1"/>
    <property type="molecule type" value="Genomic_DNA"/>
</dbReference>
<dbReference type="RefSeq" id="WP_000139678.1">
    <property type="nucleotide sequence ID" value="NZ_CADILS010000027.1"/>
</dbReference>
<dbReference type="SMR" id="A1A7M6"/>
<dbReference type="CAZy" id="GT19">
    <property type="family name" value="Glycosyltransferase Family 19"/>
</dbReference>
<dbReference type="KEGG" id="ecv:APECO1_1805"/>
<dbReference type="HOGENOM" id="CLU_036577_3_0_6"/>
<dbReference type="UniPathway" id="UPA00359">
    <property type="reaction ID" value="UER00481"/>
</dbReference>
<dbReference type="Proteomes" id="UP000008216">
    <property type="component" value="Chromosome"/>
</dbReference>
<dbReference type="GO" id="GO:0016020">
    <property type="term" value="C:membrane"/>
    <property type="evidence" value="ECO:0007669"/>
    <property type="project" value="GOC"/>
</dbReference>
<dbReference type="GO" id="GO:0008915">
    <property type="term" value="F:lipid-A-disaccharide synthase activity"/>
    <property type="evidence" value="ECO:0007669"/>
    <property type="project" value="UniProtKB-UniRule"/>
</dbReference>
<dbReference type="GO" id="GO:0005543">
    <property type="term" value="F:phospholipid binding"/>
    <property type="evidence" value="ECO:0007669"/>
    <property type="project" value="TreeGrafter"/>
</dbReference>
<dbReference type="GO" id="GO:0009245">
    <property type="term" value="P:lipid A biosynthetic process"/>
    <property type="evidence" value="ECO:0007669"/>
    <property type="project" value="UniProtKB-UniRule"/>
</dbReference>
<dbReference type="CDD" id="cd01635">
    <property type="entry name" value="Glycosyltransferase_GTB-type"/>
    <property type="match status" value="1"/>
</dbReference>
<dbReference type="HAMAP" id="MF_00392">
    <property type="entry name" value="LpxB"/>
    <property type="match status" value="1"/>
</dbReference>
<dbReference type="InterPro" id="IPR003835">
    <property type="entry name" value="Glyco_trans_19"/>
</dbReference>
<dbReference type="NCBIfam" id="TIGR00215">
    <property type="entry name" value="lpxB"/>
    <property type="match status" value="1"/>
</dbReference>
<dbReference type="PANTHER" id="PTHR30372">
    <property type="entry name" value="LIPID-A-DISACCHARIDE SYNTHASE"/>
    <property type="match status" value="1"/>
</dbReference>
<dbReference type="PANTHER" id="PTHR30372:SF4">
    <property type="entry name" value="LIPID-A-DISACCHARIDE SYNTHASE, MITOCHONDRIAL-RELATED"/>
    <property type="match status" value="1"/>
</dbReference>
<dbReference type="Pfam" id="PF02684">
    <property type="entry name" value="LpxB"/>
    <property type="match status" value="1"/>
</dbReference>
<dbReference type="SUPFAM" id="SSF53756">
    <property type="entry name" value="UDP-Glycosyltransferase/glycogen phosphorylase"/>
    <property type="match status" value="1"/>
</dbReference>
<gene>
    <name evidence="1" type="primary">lpxB</name>
    <name type="ordered locus">Ecok1_01720</name>
    <name type="ORF">APECO1_1805</name>
</gene>
<proteinExistence type="inferred from homology"/>
<protein>
    <recommendedName>
        <fullName evidence="1">Lipid-A-disaccharide synthase</fullName>
        <ecNumber evidence="1">2.4.1.182</ecNumber>
    </recommendedName>
</protein>
<accession>A1A7M6</accession>
<keyword id="KW-0328">Glycosyltransferase</keyword>
<keyword id="KW-0441">Lipid A biosynthesis</keyword>
<keyword id="KW-0444">Lipid biosynthesis</keyword>
<keyword id="KW-0443">Lipid metabolism</keyword>
<keyword id="KW-1185">Reference proteome</keyword>
<keyword id="KW-0808">Transferase</keyword>
<evidence type="ECO:0000255" key="1">
    <source>
        <dbReference type="HAMAP-Rule" id="MF_00392"/>
    </source>
</evidence>
<reference key="1">
    <citation type="journal article" date="2007" name="J. Bacteriol.">
        <title>The genome sequence of avian pathogenic Escherichia coli strain O1:K1:H7 shares strong similarities with human extraintestinal pathogenic E. coli genomes.</title>
        <authorList>
            <person name="Johnson T.J."/>
            <person name="Kariyawasam S."/>
            <person name="Wannemuehler Y."/>
            <person name="Mangiamele P."/>
            <person name="Johnson S.J."/>
            <person name="Doetkott C."/>
            <person name="Skyberg J.A."/>
            <person name="Lynne A.M."/>
            <person name="Johnson J.R."/>
            <person name="Nolan L.K."/>
        </authorList>
    </citation>
    <scope>NUCLEOTIDE SEQUENCE [LARGE SCALE GENOMIC DNA]</scope>
</reference>
<organism>
    <name type="scientific">Escherichia coli O1:K1 / APEC</name>
    <dbReference type="NCBI Taxonomy" id="405955"/>
    <lineage>
        <taxon>Bacteria</taxon>
        <taxon>Pseudomonadati</taxon>
        <taxon>Pseudomonadota</taxon>
        <taxon>Gammaproteobacteria</taxon>
        <taxon>Enterobacterales</taxon>
        <taxon>Enterobacteriaceae</taxon>
        <taxon>Escherichia</taxon>
    </lineage>
</organism>